<gene>
    <name evidence="5" type="primary">essB</name>
    <name evidence="7" type="ordered locus">NWMN_0222</name>
</gene>
<name>ESSB_STAAE</name>
<sequence length="444" mass="52024">MVKNHNPKNEMQDMLTPLDAEEAAKTKLRLDMREIPKSSIKPEHFHLMYLLEQHSPYFIDAELTELRDSFQIHYDINDNHTPFDNIKSFTKNEKLRYLLNIKNLEEVNRTRYTFVLAPDELFFTRDGLPIAKTRGLQNVVDPLPVSEAEFLTRYKALVICAFNEKQSFDALVEGNLELHKGTPFETKVIEAATLDLLTAFLDEQYQKQEQDYSQNYAYVRKVGHTVFKWVAIGMTTLSVLLIAFLAFLYFSVMKHNERIEKGYQAFVKDDYTQVLNTYDDLDGKKLDKEALYIYAKSYIQTNKQGLEKDKKENLLNNVTPNSNKDYLLYWMELGQGHLDEAINIATYLDDNDITKLALINKLNEIKNNGDLSNDKRSEETKKYNDKLQDILDKEKQVKDEKAKSEEEKAKAKDEKLKQQEENEKKQKEQAQKDKEKRQEAERKK</sequence>
<keyword id="KW-1003">Cell membrane</keyword>
<keyword id="KW-0175">Coiled coil</keyword>
<keyword id="KW-0472">Membrane</keyword>
<keyword id="KW-0812">Transmembrane</keyword>
<keyword id="KW-1133">Transmembrane helix</keyword>
<keyword id="KW-0843">Virulence</keyword>
<reference key="1">
    <citation type="journal article" date="2008" name="J. Bacteriol.">
        <title>Genome sequence of Staphylococcus aureus strain Newman and comparative analysis of staphylococcal genomes: polymorphism and evolution of two major pathogenicity islands.</title>
        <authorList>
            <person name="Baba T."/>
            <person name="Bae T."/>
            <person name="Schneewind O."/>
            <person name="Takeuchi F."/>
            <person name="Hiramatsu K."/>
        </authorList>
    </citation>
    <scope>NUCLEOTIDE SEQUENCE [LARGE SCALE GENOMIC DNA]</scope>
    <source>
        <strain>Newman</strain>
    </source>
</reference>
<reference key="2">
    <citation type="journal article" date="2005" name="Proc. Natl. Acad. Sci. U.S.A.">
        <title>EsxA and EsxB are secreted by an ESAT-6-like system that is required for the pathogenesis of Staphylococcus aureus infections.</title>
        <authorList>
            <person name="Burts M.L."/>
            <person name="Williams W.A."/>
            <person name="DeBord K."/>
            <person name="Missiakas D.M."/>
        </authorList>
    </citation>
    <scope>FUNCTION</scope>
    <scope>DISRUPTION PHENOTYPE</scope>
    <source>
        <strain>Newman</strain>
    </source>
</reference>
<accession>P0C053</accession>
<accession>A0A0H3K6K4</accession>
<dbReference type="EMBL" id="AP009351">
    <property type="protein sequence ID" value="BAF66494.1"/>
    <property type="molecule type" value="Genomic_DNA"/>
</dbReference>
<dbReference type="RefSeq" id="WP_000240338.1">
    <property type="nucleotide sequence ID" value="NZ_JBBIAE010000003.1"/>
</dbReference>
<dbReference type="SMR" id="P0C053"/>
<dbReference type="MINT" id="P0C053"/>
<dbReference type="KEGG" id="sae:NWMN_0222"/>
<dbReference type="HOGENOM" id="CLU_049737_0_0_9"/>
<dbReference type="PHI-base" id="PHI:6220"/>
<dbReference type="Proteomes" id="UP000006386">
    <property type="component" value="Chromosome"/>
</dbReference>
<dbReference type="GO" id="GO:0005886">
    <property type="term" value="C:plasma membrane"/>
    <property type="evidence" value="ECO:0007669"/>
    <property type="project" value="UniProtKB-SubCell"/>
</dbReference>
<dbReference type="GO" id="GO:0042802">
    <property type="term" value="F:identical protein binding"/>
    <property type="evidence" value="ECO:0000353"/>
    <property type="project" value="IntAct"/>
</dbReference>
<dbReference type="Gene3D" id="1.10.510.10">
    <property type="entry name" value="Transferase(Phosphotransferase) domain 1"/>
    <property type="match status" value="1"/>
</dbReference>
<dbReference type="Gene3D" id="1.25.40.680">
    <property type="entry name" value="Type VII secretion system EssB, C-terminal-like domain"/>
    <property type="match status" value="1"/>
</dbReference>
<dbReference type="InterPro" id="IPR018778">
    <property type="entry name" value="T7SS_EssB"/>
</dbReference>
<dbReference type="InterPro" id="IPR042565">
    <property type="entry name" value="T7SS_EssB_C"/>
</dbReference>
<dbReference type="NCBIfam" id="TIGR03926">
    <property type="entry name" value="T7_EssB"/>
    <property type="match status" value="1"/>
</dbReference>
<dbReference type="Pfam" id="PF10140">
    <property type="entry name" value="YukC"/>
    <property type="match status" value="1"/>
</dbReference>
<organism>
    <name type="scientific">Staphylococcus aureus (strain Newman)</name>
    <dbReference type="NCBI Taxonomy" id="426430"/>
    <lineage>
        <taxon>Bacteria</taxon>
        <taxon>Bacillati</taxon>
        <taxon>Bacillota</taxon>
        <taxon>Bacilli</taxon>
        <taxon>Bacillales</taxon>
        <taxon>Staphylococcaceae</taxon>
        <taxon>Staphylococcus</taxon>
    </lineage>
</organism>
<proteinExistence type="evidence at protein level"/>
<comment type="function">
    <text evidence="4 6">Component of the type VII secretion system (Ess) (Probable). Required for the secretion of EsxA and EsxB (PubMed:15657139).</text>
</comment>
<comment type="interaction">
    <interactant intactId="EBI-11666617">
        <id>P0C053</id>
    </interactant>
    <interactant intactId="EBI-11666617">
        <id>P0C053</id>
        <label>essB</label>
    </interactant>
    <organismsDiffer>false</organismsDiffer>
    <experiments>2</experiments>
</comment>
<comment type="subcellular location">
    <subcellularLocation>
        <location evidence="1">Cell membrane</location>
        <topology evidence="2">Single-pass membrane protein</topology>
    </subcellularLocation>
</comment>
<comment type="disruption phenotype">
    <text evidence="4">Mutations abolish synthesis and secretion of both EsxA and EsxB, without affecting their transcription.</text>
</comment>
<comment type="similarity">
    <text evidence="6">Belongs to the EssB family.</text>
</comment>
<feature type="chain" id="PRO_0000087067" description="Type VII secretion system protein EssB">
    <location>
        <begin position="1"/>
        <end position="444"/>
    </location>
</feature>
<feature type="topological domain" description="Cytoplasmic" evidence="1">
    <location>
        <begin position="1"/>
        <end position="229"/>
    </location>
</feature>
<feature type="transmembrane region" description="Helical" evidence="2">
    <location>
        <begin position="230"/>
        <end position="250"/>
    </location>
</feature>
<feature type="topological domain" description="Extracellular" evidence="1">
    <location>
        <begin position="251"/>
        <end position="444"/>
    </location>
</feature>
<feature type="region of interest" description="Disordered" evidence="3">
    <location>
        <begin position="366"/>
        <end position="444"/>
    </location>
</feature>
<feature type="coiled-coil region" evidence="2">
    <location>
        <begin position="387"/>
        <end position="443"/>
    </location>
</feature>
<feature type="compositionally biased region" description="Basic and acidic residues" evidence="3">
    <location>
        <begin position="372"/>
        <end position="444"/>
    </location>
</feature>
<evidence type="ECO:0000250" key="1">
    <source>
        <dbReference type="UniProtKB" id="Q2G185"/>
    </source>
</evidence>
<evidence type="ECO:0000255" key="2"/>
<evidence type="ECO:0000256" key="3">
    <source>
        <dbReference type="SAM" id="MobiDB-lite"/>
    </source>
</evidence>
<evidence type="ECO:0000269" key="4">
    <source>
    </source>
</evidence>
<evidence type="ECO:0000303" key="5">
    <source>
    </source>
</evidence>
<evidence type="ECO:0000305" key="6"/>
<evidence type="ECO:0000312" key="7">
    <source>
        <dbReference type="EMBL" id="BAF66494.1"/>
    </source>
</evidence>
<protein>
    <recommendedName>
        <fullName evidence="6">Type VII secretion system protein EssB</fullName>
    </recommendedName>
</protein>